<evidence type="ECO:0000255" key="1">
    <source>
        <dbReference type="HAMAP-Rule" id="MF_00149"/>
    </source>
</evidence>
<evidence type="ECO:0000256" key="2">
    <source>
        <dbReference type="SAM" id="MobiDB-lite"/>
    </source>
</evidence>
<reference key="1">
    <citation type="journal article" date="2001" name="Nature">
        <title>Complete genome sequence of a multiple drug resistant Salmonella enterica serovar Typhi CT18.</title>
        <authorList>
            <person name="Parkhill J."/>
            <person name="Dougan G."/>
            <person name="James K.D."/>
            <person name="Thomson N.R."/>
            <person name="Pickard D."/>
            <person name="Wain J."/>
            <person name="Churcher C.M."/>
            <person name="Mungall K.L."/>
            <person name="Bentley S.D."/>
            <person name="Holden M.T.G."/>
            <person name="Sebaihia M."/>
            <person name="Baker S."/>
            <person name="Basham D."/>
            <person name="Brooks K."/>
            <person name="Chillingworth T."/>
            <person name="Connerton P."/>
            <person name="Cronin A."/>
            <person name="Davis P."/>
            <person name="Davies R.M."/>
            <person name="Dowd L."/>
            <person name="White N."/>
            <person name="Farrar J."/>
            <person name="Feltwell T."/>
            <person name="Hamlin N."/>
            <person name="Haque A."/>
            <person name="Hien T.T."/>
            <person name="Holroyd S."/>
            <person name="Jagels K."/>
            <person name="Krogh A."/>
            <person name="Larsen T.S."/>
            <person name="Leather S."/>
            <person name="Moule S."/>
            <person name="O'Gaora P."/>
            <person name="Parry C."/>
            <person name="Quail M.A."/>
            <person name="Rutherford K.M."/>
            <person name="Simmonds M."/>
            <person name="Skelton J."/>
            <person name="Stevens K."/>
            <person name="Whitehead S."/>
            <person name="Barrell B.G."/>
        </authorList>
    </citation>
    <scope>NUCLEOTIDE SEQUENCE [LARGE SCALE GENOMIC DNA]</scope>
    <source>
        <strain>CT18</strain>
    </source>
</reference>
<reference key="2">
    <citation type="journal article" date="2003" name="J. Bacteriol.">
        <title>Comparative genomics of Salmonella enterica serovar Typhi strains Ty2 and CT18.</title>
        <authorList>
            <person name="Deng W."/>
            <person name="Liou S.-R."/>
            <person name="Plunkett G. III"/>
            <person name="Mayhew G.F."/>
            <person name="Rose D.J."/>
            <person name="Burland V."/>
            <person name="Kodoyianni V."/>
            <person name="Schwartz D.C."/>
            <person name="Blattner F.R."/>
        </authorList>
    </citation>
    <scope>NUCLEOTIDE SEQUENCE [LARGE SCALE GENOMIC DNA]</scope>
    <source>
        <strain>ATCC 700931 / Ty2</strain>
    </source>
</reference>
<proteinExistence type="inferred from homology"/>
<name>MUTL_SALTI</name>
<dbReference type="EMBL" id="AL513382">
    <property type="protein sequence ID" value="CAD06836.1"/>
    <property type="molecule type" value="Genomic_DNA"/>
</dbReference>
<dbReference type="EMBL" id="AE014613">
    <property type="protein sequence ID" value="AAO71859.1"/>
    <property type="molecule type" value="Genomic_DNA"/>
</dbReference>
<dbReference type="RefSeq" id="NP_458795.1">
    <property type="nucleotide sequence ID" value="NC_003198.1"/>
</dbReference>
<dbReference type="RefSeq" id="WP_001122547.1">
    <property type="nucleotide sequence ID" value="NZ_WSUR01000012.1"/>
</dbReference>
<dbReference type="SMR" id="Q8Z187"/>
<dbReference type="STRING" id="220341.gene:17588536"/>
<dbReference type="KEGG" id="stt:t4410"/>
<dbReference type="KEGG" id="sty:STY4716"/>
<dbReference type="PATRIC" id="fig|220341.7.peg.4817"/>
<dbReference type="eggNOG" id="COG0323">
    <property type="taxonomic scope" value="Bacteria"/>
</dbReference>
<dbReference type="HOGENOM" id="CLU_004131_5_1_6"/>
<dbReference type="OMA" id="ATQEQAW"/>
<dbReference type="OrthoDB" id="9763467at2"/>
<dbReference type="Proteomes" id="UP000000541">
    <property type="component" value="Chromosome"/>
</dbReference>
<dbReference type="Proteomes" id="UP000002670">
    <property type="component" value="Chromosome"/>
</dbReference>
<dbReference type="GO" id="GO:0032300">
    <property type="term" value="C:mismatch repair complex"/>
    <property type="evidence" value="ECO:0007669"/>
    <property type="project" value="InterPro"/>
</dbReference>
<dbReference type="GO" id="GO:0005524">
    <property type="term" value="F:ATP binding"/>
    <property type="evidence" value="ECO:0007669"/>
    <property type="project" value="InterPro"/>
</dbReference>
<dbReference type="GO" id="GO:0016887">
    <property type="term" value="F:ATP hydrolysis activity"/>
    <property type="evidence" value="ECO:0007669"/>
    <property type="project" value="InterPro"/>
</dbReference>
<dbReference type="GO" id="GO:0140664">
    <property type="term" value="F:ATP-dependent DNA damage sensor activity"/>
    <property type="evidence" value="ECO:0007669"/>
    <property type="project" value="InterPro"/>
</dbReference>
<dbReference type="GO" id="GO:0030983">
    <property type="term" value="F:mismatched DNA binding"/>
    <property type="evidence" value="ECO:0007669"/>
    <property type="project" value="InterPro"/>
</dbReference>
<dbReference type="GO" id="GO:0006298">
    <property type="term" value="P:mismatch repair"/>
    <property type="evidence" value="ECO:0007669"/>
    <property type="project" value="UniProtKB-UniRule"/>
</dbReference>
<dbReference type="CDD" id="cd16926">
    <property type="entry name" value="HATPase_MutL-MLH-PMS-like"/>
    <property type="match status" value="1"/>
</dbReference>
<dbReference type="CDD" id="cd03482">
    <property type="entry name" value="MutL_Trans_MutL"/>
    <property type="match status" value="1"/>
</dbReference>
<dbReference type="FunFam" id="3.30.230.10:FF:000013">
    <property type="entry name" value="DNA mismatch repair endonuclease MutL"/>
    <property type="match status" value="1"/>
</dbReference>
<dbReference type="FunFam" id="3.30.565.10:FF:000003">
    <property type="entry name" value="DNA mismatch repair endonuclease MutL"/>
    <property type="match status" value="1"/>
</dbReference>
<dbReference type="FunFam" id="3.30.1370.100:FF:000002">
    <property type="entry name" value="DNA mismatch repair protein MutL"/>
    <property type="match status" value="1"/>
</dbReference>
<dbReference type="Gene3D" id="3.30.230.10">
    <property type="match status" value="1"/>
</dbReference>
<dbReference type="Gene3D" id="3.30.565.10">
    <property type="entry name" value="Histidine kinase-like ATPase, C-terminal domain"/>
    <property type="match status" value="1"/>
</dbReference>
<dbReference type="Gene3D" id="3.30.1540.20">
    <property type="entry name" value="MutL, C-terminal domain, dimerisation subdomain"/>
    <property type="match status" value="1"/>
</dbReference>
<dbReference type="Gene3D" id="3.30.1370.100">
    <property type="entry name" value="MutL, C-terminal domain, regulatory subdomain"/>
    <property type="match status" value="1"/>
</dbReference>
<dbReference type="HAMAP" id="MF_00149">
    <property type="entry name" value="DNA_mis_repair"/>
    <property type="match status" value="1"/>
</dbReference>
<dbReference type="InterPro" id="IPR014762">
    <property type="entry name" value="DNA_mismatch_repair_CS"/>
</dbReference>
<dbReference type="InterPro" id="IPR020667">
    <property type="entry name" value="DNA_mismatch_repair_MutL"/>
</dbReference>
<dbReference type="InterPro" id="IPR013507">
    <property type="entry name" value="DNA_mismatch_S5_2-like"/>
</dbReference>
<dbReference type="InterPro" id="IPR036890">
    <property type="entry name" value="HATPase_C_sf"/>
</dbReference>
<dbReference type="InterPro" id="IPR002099">
    <property type="entry name" value="MutL/Mlh/PMS"/>
</dbReference>
<dbReference type="InterPro" id="IPR038973">
    <property type="entry name" value="MutL/Mlh/Pms-like"/>
</dbReference>
<dbReference type="InterPro" id="IPR014790">
    <property type="entry name" value="MutL_C"/>
</dbReference>
<dbReference type="InterPro" id="IPR042120">
    <property type="entry name" value="MutL_C_dimsub"/>
</dbReference>
<dbReference type="InterPro" id="IPR042121">
    <property type="entry name" value="MutL_C_regsub"/>
</dbReference>
<dbReference type="InterPro" id="IPR037198">
    <property type="entry name" value="MutL_C_sf"/>
</dbReference>
<dbReference type="InterPro" id="IPR020568">
    <property type="entry name" value="Ribosomal_Su5_D2-typ_SF"/>
</dbReference>
<dbReference type="InterPro" id="IPR014721">
    <property type="entry name" value="Ribsml_uS5_D2-typ_fold_subgr"/>
</dbReference>
<dbReference type="NCBIfam" id="TIGR00585">
    <property type="entry name" value="mutl"/>
    <property type="match status" value="1"/>
</dbReference>
<dbReference type="NCBIfam" id="NF000948">
    <property type="entry name" value="PRK00095.1-1"/>
    <property type="match status" value="1"/>
</dbReference>
<dbReference type="PANTHER" id="PTHR10073">
    <property type="entry name" value="DNA MISMATCH REPAIR PROTEIN MLH, PMS, MUTL"/>
    <property type="match status" value="1"/>
</dbReference>
<dbReference type="PANTHER" id="PTHR10073:SF12">
    <property type="entry name" value="DNA MISMATCH REPAIR PROTEIN MLH1"/>
    <property type="match status" value="1"/>
</dbReference>
<dbReference type="Pfam" id="PF01119">
    <property type="entry name" value="DNA_mis_repair"/>
    <property type="match status" value="1"/>
</dbReference>
<dbReference type="Pfam" id="PF13589">
    <property type="entry name" value="HATPase_c_3"/>
    <property type="match status" value="1"/>
</dbReference>
<dbReference type="Pfam" id="PF08676">
    <property type="entry name" value="MutL_C"/>
    <property type="match status" value="1"/>
</dbReference>
<dbReference type="SMART" id="SM01340">
    <property type="entry name" value="DNA_mis_repair"/>
    <property type="match status" value="1"/>
</dbReference>
<dbReference type="SMART" id="SM00853">
    <property type="entry name" value="MutL_C"/>
    <property type="match status" value="1"/>
</dbReference>
<dbReference type="SUPFAM" id="SSF55874">
    <property type="entry name" value="ATPase domain of HSP90 chaperone/DNA topoisomerase II/histidine kinase"/>
    <property type="match status" value="1"/>
</dbReference>
<dbReference type="SUPFAM" id="SSF118116">
    <property type="entry name" value="DNA mismatch repair protein MutL"/>
    <property type="match status" value="1"/>
</dbReference>
<dbReference type="SUPFAM" id="SSF54211">
    <property type="entry name" value="Ribosomal protein S5 domain 2-like"/>
    <property type="match status" value="1"/>
</dbReference>
<dbReference type="PROSITE" id="PS00058">
    <property type="entry name" value="DNA_MISMATCH_REPAIR_1"/>
    <property type="match status" value="1"/>
</dbReference>
<feature type="chain" id="PRO_0000177966" description="DNA mismatch repair protein MutL">
    <location>
        <begin position="1"/>
        <end position="618"/>
    </location>
</feature>
<feature type="region of interest" description="Disordered" evidence="2">
    <location>
        <begin position="366"/>
        <end position="403"/>
    </location>
</feature>
<feature type="compositionally biased region" description="Low complexity" evidence="2">
    <location>
        <begin position="366"/>
        <end position="378"/>
    </location>
</feature>
<feature type="compositionally biased region" description="Gly residues" evidence="2">
    <location>
        <begin position="383"/>
        <end position="392"/>
    </location>
</feature>
<gene>
    <name evidence="1" type="primary">mutL</name>
    <name type="ordered locus">STY4716</name>
    <name type="ordered locus">t4410</name>
</gene>
<sequence>MPIQVLPPQLANQIAAGEVVERPASVVKELVENSLDAGATRVDIDIERGGAKLIRIRDNGCGIKKEELALALARHATSKIASLDDLEAIISLGFRGEALASISSVSRLTLTSRTAEQAEAWQAYAEGRDMDVTVKPAAHPVGTTLEVLDLFYNTPARRKFMRTEKTEFNHIDEIIRRIALARFDVTLNLSHNGKLVRQYRAVAKDGQKERRLGAICGTPFLEQALAIEWQHGDLTLRGWVADPNHTTTALTEIQYCYVNGRMMRDRLINHAIRQACEDKLGADQQPAFVLYLEIDPHQVDVNVHPAKHEVRFHQSRLVHDFIYQGVLSVLQQQTETTLPLEEIAPAPRHVPENRIAAGRNHFAVPAEPTAAREPATPRYSDGASGGNGGRQSAGGWPHAQPGYQKQQGEVYRTLLQTPTTSPAPEPVAPALDGHSQSFGRVLTIVGGDCALLEHAGTIQLLSLPVAERWLRQAQLTPGQSPVCAQPLLIPLRLKVSADEKAALQKAQSLLGELGIEFQSDAQHVTIRAVPLPLRQQNLQILIPELIGYLAQQTTFATVNIAQWIARNVQSEHPQWSMAQAISLLADVERLCPQLVKAPPGGLLQPVDLHSAMNALKHE</sequence>
<keyword id="KW-0227">DNA damage</keyword>
<keyword id="KW-0234">DNA repair</keyword>
<protein>
    <recommendedName>
        <fullName evidence="1">DNA mismatch repair protein MutL</fullName>
    </recommendedName>
</protein>
<comment type="function">
    <text evidence="1">This protein is involved in the repair of mismatches in DNA. It is required for dam-dependent methyl-directed DNA mismatch repair. May act as a 'molecular matchmaker', a protein that promotes the formation of a stable complex between two or more DNA-binding proteins in an ATP-dependent manner without itself being part of a final effector complex.</text>
</comment>
<comment type="similarity">
    <text evidence="1">Belongs to the DNA mismatch repair MutL/HexB family.</text>
</comment>
<accession>Q8Z187</accession>
<organism>
    <name type="scientific">Salmonella typhi</name>
    <dbReference type="NCBI Taxonomy" id="90370"/>
    <lineage>
        <taxon>Bacteria</taxon>
        <taxon>Pseudomonadati</taxon>
        <taxon>Pseudomonadota</taxon>
        <taxon>Gammaproteobacteria</taxon>
        <taxon>Enterobacterales</taxon>
        <taxon>Enterobacteriaceae</taxon>
        <taxon>Salmonella</taxon>
    </lineage>
</organism>